<evidence type="ECO:0000269" key="1">
    <source>
    </source>
</evidence>
<evidence type="ECO:0000269" key="2">
    <source>
    </source>
</evidence>
<evidence type="ECO:0000269" key="3">
    <source>
    </source>
</evidence>
<evidence type="ECO:0000269" key="4">
    <source>
    </source>
</evidence>
<evidence type="ECO:0000269" key="5">
    <source>
    </source>
</evidence>
<evidence type="ECO:0000269" key="6">
    <source>
    </source>
</evidence>
<evidence type="ECO:0000269" key="7">
    <source>
    </source>
</evidence>
<evidence type="ECO:0000303" key="8">
    <source>
    </source>
</evidence>
<evidence type="ECO:0000303" key="9">
    <source>
    </source>
</evidence>
<evidence type="ECO:0000303" key="10">
    <source>
    </source>
</evidence>
<evidence type="ECO:0000305" key="11"/>
<evidence type="ECO:0007829" key="12">
    <source>
        <dbReference type="PDB" id="6FKG"/>
    </source>
</evidence>
<accession>P9WLP9</accession>
<accession>L0TB64</accession>
<accession>P64907</accession>
<accession>Q10869</accession>
<organism>
    <name type="scientific">Mycobacterium tuberculosis (strain ATCC 25618 / H37Rv)</name>
    <dbReference type="NCBI Taxonomy" id="83332"/>
    <lineage>
        <taxon>Bacteria</taxon>
        <taxon>Bacillati</taxon>
        <taxon>Actinomycetota</taxon>
        <taxon>Actinomycetes</taxon>
        <taxon>Mycobacteriales</taxon>
        <taxon>Mycobacteriaceae</taxon>
        <taxon>Mycobacterium</taxon>
        <taxon>Mycobacterium tuberculosis complex</taxon>
    </lineage>
</organism>
<dbReference type="EC" id="2.4.2.-" evidence="7"/>
<dbReference type="EMBL" id="AL123456">
    <property type="protein sequence ID" value="CCP44759.1"/>
    <property type="molecule type" value="Genomic_DNA"/>
</dbReference>
<dbReference type="PIR" id="C70757">
    <property type="entry name" value="C70757"/>
</dbReference>
<dbReference type="RefSeq" id="NP_216505.1">
    <property type="nucleotide sequence ID" value="NC_000962.3"/>
</dbReference>
<dbReference type="RefSeq" id="WP_003410001.1">
    <property type="nucleotide sequence ID" value="NZ_NVQJ01000043.1"/>
</dbReference>
<dbReference type="PDB" id="6FKG">
    <property type="method" value="X-ray"/>
    <property type="resolution" value="1.80 A"/>
    <property type="chains" value="A/B=2-186"/>
</dbReference>
<dbReference type="PDBsum" id="6FKG"/>
<dbReference type="SASBDB" id="P9WLP9"/>
<dbReference type="SMR" id="P9WLP9"/>
<dbReference type="STRING" id="83332.Rv1989c"/>
<dbReference type="PaxDb" id="83332-Rv1989c"/>
<dbReference type="DNASU" id="885810"/>
<dbReference type="GeneID" id="885810"/>
<dbReference type="KEGG" id="mtu:Rv1989c"/>
<dbReference type="KEGG" id="mtv:RVBD_1989c"/>
<dbReference type="TubercuList" id="Rv1989c"/>
<dbReference type="eggNOG" id="COG5654">
    <property type="taxonomic scope" value="Bacteria"/>
</dbReference>
<dbReference type="InParanoid" id="P9WLP9"/>
<dbReference type="OrthoDB" id="648213at2"/>
<dbReference type="Proteomes" id="UP000001584">
    <property type="component" value="Chromosome"/>
</dbReference>
<dbReference type="GO" id="GO:0016779">
    <property type="term" value="F:nucleotidyltransferase activity"/>
    <property type="evidence" value="ECO:0007669"/>
    <property type="project" value="UniProtKB-KW"/>
</dbReference>
<dbReference type="InterPro" id="IPR014914">
    <property type="entry name" value="RES_dom"/>
</dbReference>
<dbReference type="Pfam" id="PF08808">
    <property type="entry name" value="RES"/>
    <property type="match status" value="1"/>
</dbReference>
<dbReference type="SMART" id="SM00953">
    <property type="entry name" value="RES"/>
    <property type="match status" value="1"/>
</dbReference>
<protein>
    <recommendedName>
        <fullName evidence="10">NAD(+) phosphorylase MbcT</fullName>
        <ecNumber evidence="7">2.4.2.-</ecNumber>
    </recommendedName>
    <alternativeName>
        <fullName evidence="10">Mycobacterial cidal toxin MbcT</fullName>
    </alternativeName>
    <alternativeName>
        <fullName evidence="9">Toxin Res</fullName>
    </alternativeName>
    <alternativeName>
        <fullName evidence="8">ucAT8 toxin</fullName>
    </alternativeName>
</protein>
<sequence>MSDALDEGLVQRIDARGTIEWSETCYRYTGAHRDALSGEGARRFGGRWNPPLLFPAIYLADSAQACMVEVERAAQAASTTAEKMLEAAYRLHTIDVTDLAVLDLTTPQAREAVGLENDDIYGDDWSGCQAVGHAAWFLHMQGVLVPAAGGVGLVVTAYEQRTRPGQLQLRQSVDLTPALYQELRAT</sequence>
<reference key="1">
    <citation type="journal article" date="1998" name="Nature">
        <title>Deciphering the biology of Mycobacterium tuberculosis from the complete genome sequence.</title>
        <authorList>
            <person name="Cole S.T."/>
            <person name="Brosch R."/>
            <person name="Parkhill J."/>
            <person name="Garnier T."/>
            <person name="Churcher C.M."/>
            <person name="Harris D.E."/>
            <person name="Gordon S.V."/>
            <person name="Eiglmeier K."/>
            <person name="Gas S."/>
            <person name="Barry C.E. III"/>
            <person name="Tekaia F."/>
            <person name="Badcock K."/>
            <person name="Basham D."/>
            <person name="Brown D."/>
            <person name="Chillingworth T."/>
            <person name="Connor R."/>
            <person name="Davies R.M."/>
            <person name="Devlin K."/>
            <person name="Feltwell T."/>
            <person name="Gentles S."/>
            <person name="Hamlin N."/>
            <person name="Holroyd S."/>
            <person name="Hornsby T."/>
            <person name="Jagels K."/>
            <person name="Krogh A."/>
            <person name="McLean J."/>
            <person name="Moule S."/>
            <person name="Murphy L.D."/>
            <person name="Oliver S."/>
            <person name="Osborne J."/>
            <person name="Quail M.A."/>
            <person name="Rajandream M.A."/>
            <person name="Rogers J."/>
            <person name="Rutter S."/>
            <person name="Seeger K."/>
            <person name="Skelton S."/>
            <person name="Squares S."/>
            <person name="Squares R."/>
            <person name="Sulston J.E."/>
            <person name="Taylor K."/>
            <person name="Whitehead S."/>
            <person name="Barrell B.G."/>
        </authorList>
    </citation>
    <scope>NUCLEOTIDE SEQUENCE [LARGE SCALE GENOMIC DNA]</scope>
    <source>
        <strain>ATCC 25618 / H37Rv</strain>
    </source>
</reference>
<reference key="2">
    <citation type="journal article" date="2008" name="PLoS ONE">
        <title>The enduring hypoxic response of Mycobacterium tuberculosis.</title>
        <authorList>
            <person name="Rustad T.R."/>
            <person name="Harrell M.I."/>
            <person name="Liao R."/>
            <person name="Sherman D.R."/>
        </authorList>
    </citation>
    <scope>INDUCTION BY HYPOXIA</scope>
    <source>
        <strain>ATCC 27294 / TMC 102 / H37Rv</strain>
    </source>
</reference>
<reference key="3">
    <citation type="journal article" date="2010" name="PLoS Pathog.">
        <title>Functional genetic diversity among Mycobacterium tuberculosis complex clinical isolates: delineation of conserved core and lineage-specific transcriptomes during intracellular survival.</title>
        <authorList>
            <person name="Homolka S."/>
            <person name="Niemann S."/>
            <person name="Russell D.G."/>
            <person name="Rohde K.H."/>
        </authorList>
    </citation>
    <scope>INDUCTION IN MOUSE INFECTION MODEL</scope>
    <source>
        <strain>H37Rv</strain>
    </source>
</reference>
<reference key="4">
    <citation type="journal article" date="2011" name="MBio">
        <title>Characterization and transcriptome analysis of Mycobacterium tuberculosis persisters.</title>
        <authorList>
            <person name="Keren I."/>
            <person name="Minami S."/>
            <person name="Rubin E."/>
            <person name="Lewis K."/>
        </authorList>
    </citation>
    <scope>INDUCTION BY HYPOXIA AND IN PERSISTER CELLS</scope>
    <source>
        <strain>H37Rv</strain>
    </source>
</reference>
<reference key="5">
    <citation type="journal article" date="2011" name="Mol. Cell. Proteomics">
        <title>Proteogenomic analysis of Mycobacterium tuberculosis by high resolution mass spectrometry.</title>
        <authorList>
            <person name="Kelkar D.S."/>
            <person name="Kumar D."/>
            <person name="Kumar P."/>
            <person name="Balakrishnan L."/>
            <person name="Muthusamy B."/>
            <person name="Yadav A.K."/>
            <person name="Shrivastava P."/>
            <person name="Marimuthu A."/>
            <person name="Anand S."/>
            <person name="Sundaram H."/>
            <person name="Kingsbury R."/>
            <person name="Harsha H.C."/>
            <person name="Nair B."/>
            <person name="Prasad T.S."/>
            <person name="Chauhan D.S."/>
            <person name="Katoch K."/>
            <person name="Katoch V.M."/>
            <person name="Kumar P."/>
            <person name="Chaerkady R."/>
            <person name="Ramachandran S."/>
            <person name="Dash D."/>
            <person name="Pandey A."/>
        </authorList>
    </citation>
    <scope>IDENTIFICATION BY MASS SPECTROMETRY [LARGE SCALE ANALYSIS]</scope>
    <source>
        <strain>ATCC 25618 / H37Rv</strain>
    </source>
</reference>
<reference key="6">
    <citation type="journal article" date="2017" name="MBio">
        <title>Comprehensive essentiality analysis of the Mycobacterium tuberculosis genome via saturating transposon mutagenesis.</title>
        <authorList>
            <person name="DeJesus M.A."/>
            <person name="Gerrick E.R."/>
            <person name="Xu W."/>
            <person name="Park S.W."/>
            <person name="Long J.E."/>
            <person name="Boutte C.C."/>
            <person name="Rubin E.J."/>
            <person name="Schnappinger D."/>
            <person name="Ehrt S."/>
            <person name="Fortune S.M."/>
            <person name="Sassetti C.M."/>
            <person name="Ioerger T.R."/>
        </authorList>
    </citation>
    <scope>DISRUPTION PHENOTYPE</scope>
    <source>
        <strain>ATCC 25618 / H37Rv</strain>
    </source>
</reference>
<reference key="7">
    <citation type="journal article" date="2017" name="Sci. Rep.">
        <title>Co-expression network analysis of toxin-antitoxin loci in Mycobacterium tuberculosis reveals key modulators of cellular stress.</title>
        <authorList>
            <person name="Gupta A."/>
            <person name="Venkataraman B."/>
            <person name="Vasudevan M."/>
            <person name="Gopinath Bankar K."/>
        </authorList>
    </citation>
    <scope>INDUCTION BY STRESS</scope>
    <source>
        <strain>H37Rv</strain>
    </source>
</reference>
<reference key="8">
    <citation type="journal article" date="2019" name="Mol. Microbiol.">
        <title>The RES domain toxins of RES-Xre toxin-antitoxin modules induce cell stasis by degrading NAD+.</title>
        <authorList>
            <person name="Skjerning R.B."/>
            <person name="Senissar M."/>
            <person name="Winther K.S."/>
            <person name="Gerdes K."/>
            <person name="Brodersen D.E."/>
        </authorList>
    </citation>
    <scope>FUNCTION AS A TOXIN</scope>
    <scope>EXPRESSION IN E.COLI</scope>
    <source>
        <strain>H37Rv</strain>
    </source>
</reference>
<reference key="9">
    <citation type="journal article" date="2019" name="Mol. Cell">
        <title>An NAD+ phosphorylase toxin triggers Mycobacterium tuberculosis cell death.</title>
        <authorList>
            <person name="Freire D.M."/>
            <person name="Gutierrez C."/>
            <person name="Garza-Garcia A."/>
            <person name="Grabowska A.D."/>
            <person name="Sala A.J."/>
            <person name="Ariyachaokun K."/>
            <person name="Panikova T."/>
            <person name="Beckham K.S.H."/>
            <person name="Colom A."/>
            <person name="Pogenberg V."/>
            <person name="Cianci M."/>
            <person name="Tuukkanen A."/>
            <person name="Boudehen Y.M."/>
            <person name="Peixoto A."/>
            <person name="Botella L."/>
            <person name="Svergun D.I."/>
            <person name="Schnappinger D."/>
            <person name="Schneider T.R."/>
            <person name="Genevaux P."/>
            <person name="de Carvalho L.P.S."/>
            <person name="Wilmanns M."/>
            <person name="Parret A.H.A."/>
            <person name="Neyrolles O."/>
        </authorList>
    </citation>
    <scope>X-RAY CRYSTALLOGRAPHY (1.80 ANGSTROMS) OF 2-186 IN COMPLEX WITH ANTITOXIN</scope>
    <scope>FUNCTION AS A TOXIN</scope>
    <scope>CATALYTIC ACTIVITY</scope>
    <scope>BIOPHYSICOCHEMICAL PROPERTIES</scope>
    <scope>SUBUNIT</scope>
    <scope>INDUCTION BY STARVATION</scope>
    <scope>DISRUPTION PHENOTYPE</scope>
    <scope>BIOTECHNOLOGY</scope>
    <scope>MUTAGENESIS OF ARG-27; TYR-28; ARG-47; TYR-58; GLU-69 AND SER-126</scope>
    <source>
        <strain>ATCC 27294 / TMC 102 / H37Rv</strain>
    </source>
</reference>
<keyword id="KW-0002">3D-structure</keyword>
<keyword id="KW-0520">NAD</keyword>
<keyword id="KW-0548">Nucleotidyltransferase</keyword>
<keyword id="KW-1185">Reference proteome</keyword>
<keyword id="KW-1277">Toxin-antitoxin system</keyword>
<keyword id="KW-0808">Transferase</keyword>
<feature type="chain" id="PRO_0000103918" description="NAD(+) phosphorylase MbcT">
    <location>
        <begin position="1"/>
        <end position="186"/>
    </location>
</feature>
<feature type="mutagenesis site" description="No longer toxic." evidence="7">
    <original>R</original>
    <variation>A</variation>
    <location>
        <position position="27"/>
    </location>
</feature>
<feature type="mutagenesis site" description="No longer toxic, does not degrade NAD(+)." evidence="7">
    <original>R</original>
    <variation>E</variation>
    <location>
        <position position="27"/>
    </location>
</feature>
<feature type="mutagenesis site" description="Reduced toxicity." evidence="7">
    <original>Y</original>
    <variation>A</variation>
    <location>
        <position position="28"/>
    </location>
</feature>
<feature type="mutagenesis site" description="No longer toxic." evidence="7">
    <original>R</original>
    <variation>A</variation>
    <location>
        <position position="47"/>
    </location>
</feature>
<feature type="mutagenesis site" description="No longer toxic." evidence="7">
    <original>Y</original>
    <variation>A</variation>
    <location>
        <position position="58"/>
    </location>
</feature>
<feature type="mutagenesis site" description="Reduced toxicity." evidence="7">
    <original>E</original>
    <variation>A</variation>
    <location>
        <position position="69"/>
    </location>
</feature>
<feature type="mutagenesis site" description="No change in toxicity." evidence="7">
    <original>S</original>
    <variation>A</variation>
    <location>
        <position position="126"/>
    </location>
</feature>
<feature type="helix" evidence="12">
    <location>
        <begin position="7"/>
        <end position="16"/>
    </location>
</feature>
<feature type="strand" evidence="12">
    <location>
        <begin position="19"/>
        <end position="30"/>
    </location>
</feature>
<feature type="helix" evidence="12">
    <location>
        <begin position="39"/>
        <end position="44"/>
    </location>
</feature>
<feature type="strand" evidence="12">
    <location>
        <begin position="56"/>
        <end position="62"/>
    </location>
</feature>
<feature type="helix" evidence="12">
    <location>
        <begin position="63"/>
        <end position="76"/>
    </location>
</feature>
<feature type="helix" evidence="12">
    <location>
        <begin position="81"/>
        <end position="84"/>
    </location>
</feature>
<feature type="strand" evidence="12">
    <location>
        <begin position="89"/>
        <end position="103"/>
    </location>
</feature>
<feature type="helix" evidence="12">
    <location>
        <begin position="107"/>
        <end position="112"/>
    </location>
</feature>
<feature type="helix" evidence="12">
    <location>
        <begin position="117"/>
        <end position="121"/>
    </location>
</feature>
<feature type="helix" evidence="12">
    <location>
        <begin position="126"/>
        <end position="137"/>
    </location>
</feature>
<feature type="strand" evidence="12">
    <location>
        <begin position="142"/>
        <end position="147"/>
    </location>
</feature>
<feature type="strand" evidence="12">
    <location>
        <begin position="150"/>
        <end position="157"/>
    </location>
</feature>
<feature type="helix" evidence="12">
    <location>
        <begin position="158"/>
        <end position="161"/>
    </location>
</feature>
<feature type="strand" evidence="12">
    <location>
        <begin position="166"/>
        <end position="174"/>
    </location>
</feature>
<feature type="helix" evidence="12">
    <location>
        <begin position="177"/>
        <end position="184"/>
    </location>
</feature>
<gene>
    <name evidence="10" type="primary">mbcT</name>
    <name type="ordered locus">Rv1989c</name>
    <name type="ORF">MTCY39.30</name>
</gene>
<name>MBCT_MYCTU</name>
<comment type="function">
    <text evidence="6 7">Toxic component of a type II toxin-antitoxin (TA) system. Neutralized by cognate antitoxin MbcA (PubMed:30315706, PubMed:30792174). Degrades NAD(+) by phosphorolysis. Expression in the absence of its cognate antitoxin MbcA causes dramatic reduction of intracellular NAD(+) levels and is deleterious to cell growth, causing cell death. In a SCID mouse infection model, mice infected with bacteria overexpressing this protein survive longer. Overexpression of this protein in a mouse infection model at 21 days leads to bacterial death, and shows a synergistic 100-fold increase in mouse survival when combined with isoniazid treatment (PubMed:30792174).</text>
</comment>
<comment type="catalytic activity">
    <reaction evidence="7">
        <text>phosphate + NAD(+) = ADP-alpha-D-ribose 1''-phosphate + nicotinamide + H(+)</text>
        <dbReference type="Rhea" id="RHEA:20788"/>
        <dbReference type="ChEBI" id="CHEBI:15378"/>
        <dbReference type="ChEBI" id="CHEBI:17154"/>
        <dbReference type="ChEBI" id="CHEBI:43474"/>
        <dbReference type="ChEBI" id="CHEBI:57540"/>
        <dbReference type="ChEBI" id="CHEBI:58753"/>
    </reaction>
</comment>
<comment type="biophysicochemical properties">
    <kinetics>
        <KM evidence="7">110 uM for NAD(+)</KM>
        <text evidence="7">kcat for NAD(+) is 167 sec(-1).</text>
    </kinetics>
</comment>
<comment type="subunit">
    <text evidence="7">Heterotetramer with 2 subunits each of MbcT and MbcA; the tetramers further assemble into trimers with 3-fold symmetry. The antitoxin acts by blocking acces to the toxin active site.</text>
</comment>
<comment type="induction">
    <text evidence="1 2 3 5 7">Induced by hypoxia (PubMed:18231589). Expression induced in both active and resting C57BL/6 mouse macrophages (PubMed:20628579). Induced in persister cells (PubMed:21673191). Induced by streptomycin treatment and by starvation (PubMed:28724903). Induced by starvation stress; probably part of the mbcT-mbcA operon (PubMed:30792174).</text>
</comment>
<comment type="disruption phenotype">
    <text evidence="4 7">Not essential, it can be deleted (PubMed:28096490). Deletion of the mbcT-mbcA operon has no visible phenotype (PubMed:30792174).</text>
</comment>
<comment type="biotechnology">
    <text evidence="7">Molecules that disrupt the MbcT-MbcA complex could be candidates for anti-tuberculosis therapy.</text>
</comment>
<comment type="similarity">
    <text evidence="11">Belongs to the MbcT/ParT/Res family.</text>
</comment>
<proteinExistence type="evidence at protein level"/>